<evidence type="ECO:0000250" key="1">
    <source>
        <dbReference type="UniProtKB" id="P40045"/>
    </source>
</evidence>
<evidence type="ECO:0000305" key="2"/>
<keyword id="KW-0966">Cell projection</keyword>
<keyword id="KW-0963">Cytoplasm</keyword>
<keyword id="KW-1185">Reference proteome</keyword>
<gene>
    <name type="primary">TDA2</name>
    <name type="ordered locus">CAGL0J03190g</name>
</gene>
<comment type="subcellular location">
    <subcellularLocation>
        <location evidence="1">Cytoplasm</location>
    </subcellularLocation>
    <subcellularLocation>
        <location evidence="1">Cell projection</location>
    </subcellularLocation>
    <text evidence="1">Concentrates at cytoplasmic punctate structures and localizes at the mating projection tip.</text>
</comment>
<comment type="similarity">
    <text evidence="2">Belongs to the TDA2 family.</text>
</comment>
<sequence length="112" mass="12416">MVIEKIDDKSSNSPLTAPRLIDLIESQFSESQVSADTLIQHILESLNKHSSQYKYIVSVTSIDIPTESSSSCEIDNKFGASWNAKKDGFLTHVLEDKHAGKNHVVSVAWLSK</sequence>
<name>TDA2_CANGA</name>
<organism>
    <name type="scientific">Candida glabrata (strain ATCC 2001 / BCRC 20586 / JCM 3761 / NBRC 0622 / NRRL Y-65 / CBS 138)</name>
    <name type="common">Yeast</name>
    <name type="synonym">Nakaseomyces glabratus</name>
    <dbReference type="NCBI Taxonomy" id="284593"/>
    <lineage>
        <taxon>Eukaryota</taxon>
        <taxon>Fungi</taxon>
        <taxon>Dikarya</taxon>
        <taxon>Ascomycota</taxon>
        <taxon>Saccharomycotina</taxon>
        <taxon>Saccharomycetes</taxon>
        <taxon>Saccharomycetales</taxon>
        <taxon>Saccharomycetaceae</taxon>
        <taxon>Nakaseomyces</taxon>
    </lineage>
</organism>
<dbReference type="EMBL" id="CR380956">
    <property type="protein sequence ID" value="CAG60792.1"/>
    <property type="molecule type" value="Genomic_DNA"/>
</dbReference>
<dbReference type="RefSeq" id="XP_447843.1">
    <property type="nucleotide sequence ID" value="XM_447843.1"/>
</dbReference>
<dbReference type="SMR" id="Q6FPK1"/>
<dbReference type="FunCoup" id="Q6FPK1">
    <property type="interactions" value="35"/>
</dbReference>
<dbReference type="STRING" id="284593.Q6FPK1"/>
<dbReference type="EnsemblFungi" id="CAGL0J03190g-T">
    <property type="protein sequence ID" value="CAGL0J03190g-T-p1"/>
    <property type="gene ID" value="CAGL0J03190g"/>
</dbReference>
<dbReference type="KEGG" id="cgr:2889730"/>
<dbReference type="CGD" id="CAL0133432">
    <property type="gene designation" value="CAGL0J03190g"/>
</dbReference>
<dbReference type="VEuPathDB" id="FungiDB:B1J91_J03190g"/>
<dbReference type="VEuPathDB" id="FungiDB:CAGL0J03190g"/>
<dbReference type="eggNOG" id="ENOG502S7YH">
    <property type="taxonomic scope" value="Eukaryota"/>
</dbReference>
<dbReference type="HOGENOM" id="CLU_137494_1_0_1"/>
<dbReference type="InParanoid" id="Q6FPK1"/>
<dbReference type="OMA" id="TIIWISK"/>
<dbReference type="Proteomes" id="UP000002428">
    <property type="component" value="Chromosome J"/>
</dbReference>
<dbReference type="GO" id="GO:0110131">
    <property type="term" value="C:Aim21-Tda2 complex"/>
    <property type="evidence" value="ECO:0007669"/>
    <property type="project" value="EnsemblFungi"/>
</dbReference>
<dbReference type="GO" id="GO:0042995">
    <property type="term" value="C:cell projection"/>
    <property type="evidence" value="ECO:0007669"/>
    <property type="project" value="UniProtKB-SubCell"/>
</dbReference>
<dbReference type="GO" id="GO:0051015">
    <property type="term" value="F:actin filament binding"/>
    <property type="evidence" value="ECO:0007669"/>
    <property type="project" value="EnsemblFungi"/>
</dbReference>
<dbReference type="GO" id="GO:0030837">
    <property type="term" value="P:negative regulation of actin filament polymerization"/>
    <property type="evidence" value="ECO:0007669"/>
    <property type="project" value="EnsemblFungi"/>
</dbReference>
<dbReference type="GO" id="GO:2000813">
    <property type="term" value="P:negative regulation of barbed-end actin filament capping"/>
    <property type="evidence" value="ECO:0007669"/>
    <property type="project" value="EnsemblFungi"/>
</dbReference>
<dbReference type="CDD" id="cd21457">
    <property type="entry name" value="DLC-like_TDA2"/>
    <property type="match status" value="1"/>
</dbReference>
<dbReference type="Gene3D" id="3.30.1140.40">
    <property type="entry name" value="Tctex-1"/>
    <property type="match status" value="1"/>
</dbReference>
<dbReference type="InterPro" id="IPR005334">
    <property type="entry name" value="Tctex-1-like"/>
</dbReference>
<dbReference type="InterPro" id="IPR038586">
    <property type="entry name" value="Tctex-1-like_sf"/>
</dbReference>
<dbReference type="Pfam" id="PF03645">
    <property type="entry name" value="Tctex-1"/>
    <property type="match status" value="1"/>
</dbReference>
<protein>
    <recommendedName>
        <fullName>Topoisomerase I damage affected protein 2</fullName>
    </recommendedName>
</protein>
<feature type="chain" id="PRO_0000410729" description="Topoisomerase I damage affected protein 2">
    <location>
        <begin position="1"/>
        <end position="112"/>
    </location>
</feature>
<proteinExistence type="inferred from homology"/>
<reference key="1">
    <citation type="journal article" date="2004" name="Nature">
        <title>Genome evolution in yeasts.</title>
        <authorList>
            <person name="Dujon B."/>
            <person name="Sherman D."/>
            <person name="Fischer G."/>
            <person name="Durrens P."/>
            <person name="Casaregola S."/>
            <person name="Lafontaine I."/>
            <person name="de Montigny J."/>
            <person name="Marck C."/>
            <person name="Neuveglise C."/>
            <person name="Talla E."/>
            <person name="Goffard N."/>
            <person name="Frangeul L."/>
            <person name="Aigle M."/>
            <person name="Anthouard V."/>
            <person name="Babour A."/>
            <person name="Barbe V."/>
            <person name="Barnay S."/>
            <person name="Blanchin S."/>
            <person name="Beckerich J.-M."/>
            <person name="Beyne E."/>
            <person name="Bleykasten C."/>
            <person name="Boisrame A."/>
            <person name="Boyer J."/>
            <person name="Cattolico L."/>
            <person name="Confanioleri F."/>
            <person name="de Daruvar A."/>
            <person name="Despons L."/>
            <person name="Fabre E."/>
            <person name="Fairhead C."/>
            <person name="Ferry-Dumazet H."/>
            <person name="Groppi A."/>
            <person name="Hantraye F."/>
            <person name="Hennequin C."/>
            <person name="Jauniaux N."/>
            <person name="Joyet P."/>
            <person name="Kachouri R."/>
            <person name="Kerrest A."/>
            <person name="Koszul R."/>
            <person name="Lemaire M."/>
            <person name="Lesur I."/>
            <person name="Ma L."/>
            <person name="Muller H."/>
            <person name="Nicaud J.-M."/>
            <person name="Nikolski M."/>
            <person name="Oztas S."/>
            <person name="Ozier-Kalogeropoulos O."/>
            <person name="Pellenz S."/>
            <person name="Potier S."/>
            <person name="Richard G.-F."/>
            <person name="Straub M.-L."/>
            <person name="Suleau A."/>
            <person name="Swennen D."/>
            <person name="Tekaia F."/>
            <person name="Wesolowski-Louvel M."/>
            <person name="Westhof E."/>
            <person name="Wirth B."/>
            <person name="Zeniou-Meyer M."/>
            <person name="Zivanovic Y."/>
            <person name="Bolotin-Fukuhara M."/>
            <person name="Thierry A."/>
            <person name="Bouchier C."/>
            <person name="Caudron B."/>
            <person name="Scarpelli C."/>
            <person name="Gaillardin C."/>
            <person name="Weissenbach J."/>
            <person name="Wincker P."/>
            <person name="Souciet J.-L."/>
        </authorList>
    </citation>
    <scope>NUCLEOTIDE SEQUENCE [LARGE SCALE GENOMIC DNA]</scope>
    <source>
        <strain>ATCC 2001 / BCRC 20586 / JCM 3761 / NBRC 0622 / NRRL Y-65 / CBS 138</strain>
    </source>
</reference>
<accession>Q6FPK1</accession>